<feature type="chain" id="PRO_0000202191" description="Uncharacterized protein TP_0118">
    <location>
        <begin position="1"/>
        <end position="421"/>
    </location>
</feature>
<feature type="coiled-coil region" evidence="1">
    <location>
        <begin position="126"/>
        <end position="182"/>
    </location>
</feature>
<feature type="coiled-coil region" evidence="1">
    <location>
        <begin position="328"/>
        <end position="397"/>
    </location>
</feature>
<sequence length="421" mass="46702">MFADKSLSALNAACQRAQQDLQSHCCSLGEHIVRGGAACDISGLGVQDTDISRCHALQRQRDQVAESILDIKSILQRQEELAALGKRVSKVLHRHARQERDVLRSFVAQYYATYAHVGLPALEPIYARTAELESTLQDLRAKRDQLLETCTFGSILERVGLQAKSAVVQRRIRVLEAKIQKIITLCTPDVIAHPDVERMYHAGELSSALSAAYARLISDRGVYASNLQHSQELMDEQEALDARLRALDCGAKPLKRVAAFTAQVSELDEDINALCARIGAAYASCFFTEEGFAQPPLSQKTRPTVPDELSTLLRTVAEARMRVARAGYQVECAKLRQKLQSEQRVCESFCRSIEEYRRGIKEYEAMIESAQQNVALSKATVARLAQSLEEASERLTLFETSPEPIVLSSEVLSVPQEKASV</sequence>
<proteinExistence type="predicted"/>
<keyword id="KW-0175">Coiled coil</keyword>
<keyword id="KW-1185">Reference proteome</keyword>
<organism>
    <name type="scientific">Treponema pallidum (strain Nichols)</name>
    <dbReference type="NCBI Taxonomy" id="243276"/>
    <lineage>
        <taxon>Bacteria</taxon>
        <taxon>Pseudomonadati</taxon>
        <taxon>Spirochaetota</taxon>
        <taxon>Spirochaetia</taxon>
        <taxon>Spirochaetales</taxon>
        <taxon>Treponemataceae</taxon>
        <taxon>Treponema</taxon>
    </lineage>
</organism>
<dbReference type="EMBL" id="AE000520">
    <property type="protein sequence ID" value="AAC65114.1"/>
    <property type="molecule type" value="Genomic_DNA"/>
</dbReference>
<dbReference type="PIR" id="E71363">
    <property type="entry name" value="E71363"/>
</dbReference>
<dbReference type="RefSeq" id="WP_010881567.1">
    <property type="nucleotide sequence ID" value="NC_021490.2"/>
</dbReference>
<dbReference type="SMR" id="O83155"/>
<dbReference type="STRING" id="243276.TP_0118"/>
<dbReference type="EnsemblBacteria" id="AAC65114">
    <property type="protein sequence ID" value="AAC65114"/>
    <property type="gene ID" value="TP_0118"/>
</dbReference>
<dbReference type="KEGG" id="tpa:TP_0118"/>
<dbReference type="KEGG" id="tpw:TPANIC_0118"/>
<dbReference type="eggNOG" id="ENOG5030SAZ">
    <property type="taxonomic scope" value="Bacteria"/>
</dbReference>
<dbReference type="HOGENOM" id="CLU_652026_0_0_12"/>
<dbReference type="OrthoDB" id="10015800at2"/>
<dbReference type="Proteomes" id="UP000000811">
    <property type="component" value="Chromosome"/>
</dbReference>
<gene>
    <name type="ordered locus">TP_0118</name>
</gene>
<protein>
    <recommendedName>
        <fullName>Uncharacterized protein TP_0118</fullName>
    </recommendedName>
</protein>
<accession>O83155</accession>
<evidence type="ECO:0000255" key="1"/>
<reference key="1">
    <citation type="journal article" date="1998" name="Science">
        <title>Complete genome sequence of Treponema pallidum, the syphilis spirochete.</title>
        <authorList>
            <person name="Fraser C.M."/>
            <person name="Norris S.J."/>
            <person name="Weinstock G.M."/>
            <person name="White O."/>
            <person name="Sutton G.G."/>
            <person name="Dodson R.J."/>
            <person name="Gwinn M.L."/>
            <person name="Hickey E.K."/>
            <person name="Clayton R.A."/>
            <person name="Ketchum K.A."/>
            <person name="Sodergren E."/>
            <person name="Hardham J.M."/>
            <person name="McLeod M.P."/>
            <person name="Salzberg S.L."/>
            <person name="Peterson J.D."/>
            <person name="Khalak H.G."/>
            <person name="Richardson D.L."/>
            <person name="Howell J.K."/>
            <person name="Chidambaram M."/>
            <person name="Utterback T.R."/>
            <person name="McDonald L.A."/>
            <person name="Artiach P."/>
            <person name="Bowman C."/>
            <person name="Cotton M.D."/>
            <person name="Fujii C."/>
            <person name="Garland S.A."/>
            <person name="Hatch B."/>
            <person name="Horst K."/>
            <person name="Roberts K.M."/>
            <person name="Sandusky M."/>
            <person name="Weidman J.F."/>
            <person name="Smith H.O."/>
            <person name="Venter J.C."/>
        </authorList>
    </citation>
    <scope>NUCLEOTIDE SEQUENCE [LARGE SCALE GENOMIC DNA]</scope>
    <source>
        <strain>Nichols</strain>
    </source>
</reference>
<name>Y118_TREPA</name>